<sequence>MRCPFCGNIDTQVKDSRPAEDHVSIRRRRFCPACGGRFTTYERVQLRDLVVIKSSGKREDFDRTKLERSIRIAMQKRPIEPERIDQMISGIVRRLESLGDTDIPSKVIGEIVMESLARIDTVAYVRFASVYKNFQAADDFDKFVSELRPTAPAEE</sequence>
<accession>A4WQT3</accession>
<keyword id="KW-0067">ATP-binding</keyword>
<keyword id="KW-0238">DNA-binding</keyword>
<keyword id="KW-0479">Metal-binding</keyword>
<keyword id="KW-0547">Nucleotide-binding</keyword>
<keyword id="KW-0678">Repressor</keyword>
<keyword id="KW-0804">Transcription</keyword>
<keyword id="KW-0805">Transcription regulation</keyword>
<keyword id="KW-0862">Zinc</keyword>
<keyword id="KW-0863">Zinc-finger</keyword>
<evidence type="ECO:0000255" key="1">
    <source>
        <dbReference type="HAMAP-Rule" id="MF_00440"/>
    </source>
</evidence>
<gene>
    <name evidence="1" type="primary">nrdR</name>
    <name type="ordered locus">Rsph17025_0843</name>
</gene>
<reference key="1">
    <citation type="submission" date="2007-04" db="EMBL/GenBank/DDBJ databases">
        <title>Complete sequence of chromosome of Rhodobacter sphaeroides ATCC 17025.</title>
        <authorList>
            <consortium name="US DOE Joint Genome Institute"/>
            <person name="Copeland A."/>
            <person name="Lucas S."/>
            <person name="Lapidus A."/>
            <person name="Barry K."/>
            <person name="Detter J.C."/>
            <person name="Glavina del Rio T."/>
            <person name="Hammon N."/>
            <person name="Israni S."/>
            <person name="Dalin E."/>
            <person name="Tice H."/>
            <person name="Pitluck S."/>
            <person name="Chertkov O."/>
            <person name="Brettin T."/>
            <person name="Bruce D."/>
            <person name="Han C."/>
            <person name="Schmutz J."/>
            <person name="Larimer F."/>
            <person name="Land M."/>
            <person name="Hauser L."/>
            <person name="Kyrpides N."/>
            <person name="Kim E."/>
            <person name="Richardson P."/>
            <person name="Mackenzie C."/>
            <person name="Choudhary M."/>
            <person name="Donohue T.J."/>
            <person name="Kaplan S."/>
        </authorList>
    </citation>
    <scope>NUCLEOTIDE SEQUENCE [LARGE SCALE GENOMIC DNA]</scope>
    <source>
        <strain>ATCC 17025 / ATH 2.4.3</strain>
    </source>
</reference>
<dbReference type="EMBL" id="CP000661">
    <property type="protein sequence ID" value="ABP69747.1"/>
    <property type="molecule type" value="Genomic_DNA"/>
</dbReference>
<dbReference type="SMR" id="A4WQT3"/>
<dbReference type="STRING" id="349102.Rsph17025_0843"/>
<dbReference type="KEGG" id="rsq:Rsph17025_0843"/>
<dbReference type="eggNOG" id="COG1327">
    <property type="taxonomic scope" value="Bacteria"/>
</dbReference>
<dbReference type="HOGENOM" id="CLU_108412_0_1_5"/>
<dbReference type="BioCyc" id="RSPH349102:G1G8M-866-MONOMER"/>
<dbReference type="GO" id="GO:0005524">
    <property type="term" value="F:ATP binding"/>
    <property type="evidence" value="ECO:0007669"/>
    <property type="project" value="UniProtKB-KW"/>
</dbReference>
<dbReference type="GO" id="GO:0003677">
    <property type="term" value="F:DNA binding"/>
    <property type="evidence" value="ECO:0007669"/>
    <property type="project" value="UniProtKB-KW"/>
</dbReference>
<dbReference type="GO" id="GO:0008270">
    <property type="term" value="F:zinc ion binding"/>
    <property type="evidence" value="ECO:0007669"/>
    <property type="project" value="UniProtKB-UniRule"/>
</dbReference>
<dbReference type="GO" id="GO:0045892">
    <property type="term" value="P:negative regulation of DNA-templated transcription"/>
    <property type="evidence" value="ECO:0007669"/>
    <property type="project" value="UniProtKB-UniRule"/>
</dbReference>
<dbReference type="HAMAP" id="MF_00440">
    <property type="entry name" value="NrdR"/>
    <property type="match status" value="1"/>
</dbReference>
<dbReference type="InterPro" id="IPR005144">
    <property type="entry name" value="ATP-cone_dom"/>
</dbReference>
<dbReference type="InterPro" id="IPR055173">
    <property type="entry name" value="NrdR-like_N"/>
</dbReference>
<dbReference type="InterPro" id="IPR003796">
    <property type="entry name" value="RNR_NrdR-like"/>
</dbReference>
<dbReference type="NCBIfam" id="TIGR00244">
    <property type="entry name" value="transcriptional regulator NrdR"/>
    <property type="match status" value="1"/>
</dbReference>
<dbReference type="PANTHER" id="PTHR30455">
    <property type="entry name" value="TRANSCRIPTIONAL REPRESSOR NRDR"/>
    <property type="match status" value="1"/>
</dbReference>
<dbReference type="PANTHER" id="PTHR30455:SF2">
    <property type="entry name" value="TRANSCRIPTIONAL REPRESSOR NRDR"/>
    <property type="match status" value="1"/>
</dbReference>
<dbReference type="Pfam" id="PF03477">
    <property type="entry name" value="ATP-cone"/>
    <property type="match status" value="1"/>
</dbReference>
<dbReference type="Pfam" id="PF22811">
    <property type="entry name" value="Zn_ribbon_NrdR"/>
    <property type="match status" value="1"/>
</dbReference>
<dbReference type="PROSITE" id="PS51161">
    <property type="entry name" value="ATP_CONE"/>
    <property type="match status" value="1"/>
</dbReference>
<proteinExistence type="inferred from homology"/>
<feature type="chain" id="PRO_1000080812" description="Transcriptional repressor NrdR">
    <location>
        <begin position="1"/>
        <end position="155"/>
    </location>
</feature>
<feature type="domain" description="ATP-cone" evidence="1">
    <location>
        <begin position="49"/>
        <end position="139"/>
    </location>
</feature>
<feature type="zinc finger region" evidence="1">
    <location>
        <begin position="3"/>
        <end position="34"/>
    </location>
</feature>
<comment type="function">
    <text evidence="1">Negatively regulates transcription of bacterial ribonucleotide reductase nrd genes and operons by binding to NrdR-boxes.</text>
</comment>
<comment type="cofactor">
    <cofactor evidence="1">
        <name>Zn(2+)</name>
        <dbReference type="ChEBI" id="CHEBI:29105"/>
    </cofactor>
    <text evidence="1">Binds 1 zinc ion.</text>
</comment>
<comment type="similarity">
    <text evidence="1">Belongs to the NrdR family.</text>
</comment>
<organism>
    <name type="scientific">Cereibacter sphaeroides (strain ATCC 17025 / ATH 2.4.3)</name>
    <name type="common">Rhodobacter sphaeroides</name>
    <dbReference type="NCBI Taxonomy" id="349102"/>
    <lineage>
        <taxon>Bacteria</taxon>
        <taxon>Pseudomonadati</taxon>
        <taxon>Pseudomonadota</taxon>
        <taxon>Alphaproteobacteria</taxon>
        <taxon>Rhodobacterales</taxon>
        <taxon>Paracoccaceae</taxon>
        <taxon>Cereibacter</taxon>
    </lineage>
</organism>
<protein>
    <recommendedName>
        <fullName evidence="1">Transcriptional repressor NrdR</fullName>
    </recommendedName>
</protein>
<name>NRDR_CERS5</name>